<reference key="1">
    <citation type="journal article" date="2007" name="J. Biol. Chem.">
        <title>LPT1 encodes a membrane-bound O-acyltransferase involved in the acylation of lysophospholipids in the yeast Saccharomyces cerevisiae.</title>
        <authorList>
            <person name="Tamaki H."/>
            <person name="Shimada A."/>
            <person name="Itoh Y."/>
            <person name="Ohya M."/>
            <person name="Takase J."/>
            <person name="Miyashita M."/>
            <person name="Miyagawa H."/>
            <person name="Nozaki H."/>
            <person name="Nakayama R."/>
            <person name="Kumagai H."/>
        </authorList>
    </citation>
    <scope>NUCLEOTIDE SEQUENCE [MRNA] (ISOFORM 1)</scope>
</reference>
<reference key="2">
    <citation type="journal article" date="2008" name="Proc. Natl. Acad. Sci. U.S.A.">
        <title>Discovery of a lysophospholipid acyltransferase family essential for membrane asymmetry and diversity.</title>
        <authorList>
            <person name="Hishikawa D."/>
            <person name="Shindou H."/>
            <person name="Kobayashi S."/>
            <person name="Nakanishi H."/>
            <person name="Taguchi R."/>
            <person name="Shimizu T."/>
        </authorList>
    </citation>
    <scope>NUCLEOTIDE SEQUENCE [MRNA] (ISOFORM 1)</scope>
    <scope>FUNCTION</scope>
    <scope>BIOPHYSICOCHEMICAL PROPERTIES</scope>
    <scope>SUBCELLULAR LOCATION</scope>
    <scope>TISSUE SPECIFICITY</scope>
    <scope>CATALYTIC ACTIVITY</scope>
</reference>
<reference key="3">
    <citation type="journal article" date="2005" name="Science">
        <title>The transcriptional landscape of the mammalian genome.</title>
        <authorList>
            <person name="Carninci P."/>
            <person name="Kasukawa T."/>
            <person name="Katayama S."/>
            <person name="Gough J."/>
            <person name="Frith M.C."/>
            <person name="Maeda N."/>
            <person name="Oyama R."/>
            <person name="Ravasi T."/>
            <person name="Lenhard B."/>
            <person name="Wells C."/>
            <person name="Kodzius R."/>
            <person name="Shimokawa K."/>
            <person name="Bajic V.B."/>
            <person name="Brenner S.E."/>
            <person name="Batalov S."/>
            <person name="Forrest A.R."/>
            <person name="Zavolan M."/>
            <person name="Davis M.J."/>
            <person name="Wilming L.G."/>
            <person name="Aidinis V."/>
            <person name="Allen J.E."/>
            <person name="Ambesi-Impiombato A."/>
            <person name="Apweiler R."/>
            <person name="Aturaliya R.N."/>
            <person name="Bailey T.L."/>
            <person name="Bansal M."/>
            <person name="Baxter L."/>
            <person name="Beisel K.W."/>
            <person name="Bersano T."/>
            <person name="Bono H."/>
            <person name="Chalk A.M."/>
            <person name="Chiu K.P."/>
            <person name="Choudhary V."/>
            <person name="Christoffels A."/>
            <person name="Clutterbuck D.R."/>
            <person name="Crowe M.L."/>
            <person name="Dalla E."/>
            <person name="Dalrymple B.P."/>
            <person name="de Bono B."/>
            <person name="Della Gatta G."/>
            <person name="di Bernardo D."/>
            <person name="Down T."/>
            <person name="Engstrom P."/>
            <person name="Fagiolini M."/>
            <person name="Faulkner G."/>
            <person name="Fletcher C.F."/>
            <person name="Fukushima T."/>
            <person name="Furuno M."/>
            <person name="Futaki S."/>
            <person name="Gariboldi M."/>
            <person name="Georgii-Hemming P."/>
            <person name="Gingeras T.R."/>
            <person name="Gojobori T."/>
            <person name="Green R.E."/>
            <person name="Gustincich S."/>
            <person name="Harbers M."/>
            <person name="Hayashi Y."/>
            <person name="Hensch T.K."/>
            <person name="Hirokawa N."/>
            <person name="Hill D."/>
            <person name="Huminiecki L."/>
            <person name="Iacono M."/>
            <person name="Ikeo K."/>
            <person name="Iwama A."/>
            <person name="Ishikawa T."/>
            <person name="Jakt M."/>
            <person name="Kanapin A."/>
            <person name="Katoh M."/>
            <person name="Kawasawa Y."/>
            <person name="Kelso J."/>
            <person name="Kitamura H."/>
            <person name="Kitano H."/>
            <person name="Kollias G."/>
            <person name="Krishnan S.P."/>
            <person name="Kruger A."/>
            <person name="Kummerfeld S.K."/>
            <person name="Kurochkin I.V."/>
            <person name="Lareau L.F."/>
            <person name="Lazarevic D."/>
            <person name="Lipovich L."/>
            <person name="Liu J."/>
            <person name="Liuni S."/>
            <person name="McWilliam S."/>
            <person name="Madan Babu M."/>
            <person name="Madera M."/>
            <person name="Marchionni L."/>
            <person name="Matsuda H."/>
            <person name="Matsuzawa S."/>
            <person name="Miki H."/>
            <person name="Mignone F."/>
            <person name="Miyake S."/>
            <person name="Morris K."/>
            <person name="Mottagui-Tabar S."/>
            <person name="Mulder N."/>
            <person name="Nakano N."/>
            <person name="Nakauchi H."/>
            <person name="Ng P."/>
            <person name="Nilsson R."/>
            <person name="Nishiguchi S."/>
            <person name="Nishikawa S."/>
            <person name="Nori F."/>
            <person name="Ohara O."/>
            <person name="Okazaki Y."/>
            <person name="Orlando V."/>
            <person name="Pang K.C."/>
            <person name="Pavan W.J."/>
            <person name="Pavesi G."/>
            <person name="Pesole G."/>
            <person name="Petrovsky N."/>
            <person name="Piazza S."/>
            <person name="Reed J."/>
            <person name="Reid J.F."/>
            <person name="Ring B.Z."/>
            <person name="Ringwald M."/>
            <person name="Rost B."/>
            <person name="Ruan Y."/>
            <person name="Salzberg S.L."/>
            <person name="Sandelin A."/>
            <person name="Schneider C."/>
            <person name="Schoenbach C."/>
            <person name="Sekiguchi K."/>
            <person name="Semple C.A."/>
            <person name="Seno S."/>
            <person name="Sessa L."/>
            <person name="Sheng Y."/>
            <person name="Shibata Y."/>
            <person name="Shimada H."/>
            <person name="Shimada K."/>
            <person name="Silva D."/>
            <person name="Sinclair B."/>
            <person name="Sperling S."/>
            <person name="Stupka E."/>
            <person name="Sugiura K."/>
            <person name="Sultana R."/>
            <person name="Takenaka Y."/>
            <person name="Taki K."/>
            <person name="Tammoja K."/>
            <person name="Tan S.L."/>
            <person name="Tang S."/>
            <person name="Taylor M.S."/>
            <person name="Tegner J."/>
            <person name="Teichmann S.A."/>
            <person name="Ueda H.R."/>
            <person name="van Nimwegen E."/>
            <person name="Verardo R."/>
            <person name="Wei C.L."/>
            <person name="Yagi K."/>
            <person name="Yamanishi H."/>
            <person name="Zabarovsky E."/>
            <person name="Zhu S."/>
            <person name="Zimmer A."/>
            <person name="Hide W."/>
            <person name="Bult C."/>
            <person name="Grimmond S.M."/>
            <person name="Teasdale R.D."/>
            <person name="Liu E.T."/>
            <person name="Brusic V."/>
            <person name="Quackenbush J."/>
            <person name="Wahlestedt C."/>
            <person name="Mattick J.S."/>
            <person name="Hume D.A."/>
            <person name="Kai C."/>
            <person name="Sasaki D."/>
            <person name="Tomaru Y."/>
            <person name="Fukuda S."/>
            <person name="Kanamori-Katayama M."/>
            <person name="Suzuki M."/>
            <person name="Aoki J."/>
            <person name="Arakawa T."/>
            <person name="Iida J."/>
            <person name="Imamura K."/>
            <person name="Itoh M."/>
            <person name="Kato T."/>
            <person name="Kawaji H."/>
            <person name="Kawagashira N."/>
            <person name="Kawashima T."/>
            <person name="Kojima M."/>
            <person name="Kondo S."/>
            <person name="Konno H."/>
            <person name="Nakano K."/>
            <person name="Ninomiya N."/>
            <person name="Nishio T."/>
            <person name="Okada M."/>
            <person name="Plessy C."/>
            <person name="Shibata K."/>
            <person name="Shiraki T."/>
            <person name="Suzuki S."/>
            <person name="Tagami M."/>
            <person name="Waki K."/>
            <person name="Watahiki A."/>
            <person name="Okamura-Oho Y."/>
            <person name="Suzuki H."/>
            <person name="Kawai J."/>
            <person name="Hayashizaki Y."/>
        </authorList>
    </citation>
    <scope>NUCLEOTIDE SEQUENCE [LARGE SCALE MRNA] (ISOFORMS 2 AND 3)</scope>
    <source>
        <strain>C57BL/6J</strain>
        <tissue>Embryoid bodies</tissue>
        <tissue>Medulla oblongata</tissue>
        <tissue>Testis</tissue>
    </source>
</reference>
<reference key="4">
    <citation type="journal article" date="2004" name="Genome Res.">
        <title>The status, quality, and expansion of the NIH full-length cDNA project: the Mammalian Gene Collection (MGC).</title>
        <authorList>
            <consortium name="The MGC Project Team"/>
        </authorList>
    </citation>
    <scope>NUCLEOTIDE SEQUENCE [LARGE SCALE MRNA] (ISOFORM 2)</scope>
    <source>
        <strain>Czech II</strain>
        <tissue>Eye</tissue>
        <tissue>Mammary tumor</tissue>
    </source>
</reference>
<reference key="5">
    <citation type="journal article" date="2010" name="Cell">
        <title>A tissue-specific atlas of mouse protein phosphorylation and expression.</title>
        <authorList>
            <person name="Huttlin E.L."/>
            <person name="Jedrychowski M.P."/>
            <person name="Elias J.E."/>
            <person name="Goswami T."/>
            <person name="Rad R."/>
            <person name="Beausoleil S.A."/>
            <person name="Villen J."/>
            <person name="Haas W."/>
            <person name="Sowa M.E."/>
            <person name="Gygi S.P."/>
        </authorList>
    </citation>
    <scope>IDENTIFICATION BY MASS SPECTROMETRY [LARGE SCALE ANALYSIS]</scope>
    <source>
        <tissue>Heart</tissue>
        <tissue>Kidney</tissue>
        <tissue>Lung</tissue>
    </source>
</reference>
<reference key="6">
    <citation type="journal article" date="2017" name="Sci. Rep.">
        <title>Lysophosphatidylcholine acyltransferase 4 is involved in chondrogenic differentiation of ATDC5 cells.</title>
        <authorList>
            <person name="Tabe S."/>
            <person name="Hikiji H."/>
            <person name="Ariyoshi W."/>
            <person name="Hashidate-Yoshida T."/>
            <person name="Shindou H."/>
            <person name="Shimizu T."/>
            <person name="Okinaga T."/>
            <person name="Seta Y."/>
            <person name="Tominaga K."/>
            <person name="Nishihara T."/>
        </authorList>
    </citation>
    <scope>FUNCTION</scope>
    <scope>CATALYTIC ACTIVITY</scope>
    <scope>INDUCTION</scope>
</reference>
<accession>Q8R3I2</accession>
<accession>A9EDS7</accession>
<accession>Q8BHH5</accession>
<accession>Q8BM56</accession>
<accession>Q8R192</accession>
<accession>Q9CZ73</accession>
<organism>
    <name type="scientific">Mus musculus</name>
    <name type="common">Mouse</name>
    <dbReference type="NCBI Taxonomy" id="10090"/>
    <lineage>
        <taxon>Eukaryota</taxon>
        <taxon>Metazoa</taxon>
        <taxon>Chordata</taxon>
        <taxon>Craniata</taxon>
        <taxon>Vertebrata</taxon>
        <taxon>Euteleostomi</taxon>
        <taxon>Mammalia</taxon>
        <taxon>Eutheria</taxon>
        <taxon>Euarchontoglires</taxon>
        <taxon>Glires</taxon>
        <taxon>Rodentia</taxon>
        <taxon>Myomorpha</taxon>
        <taxon>Muroidea</taxon>
        <taxon>Muridae</taxon>
        <taxon>Murinae</taxon>
        <taxon>Mus</taxon>
        <taxon>Mus</taxon>
    </lineage>
</organism>
<feature type="chain" id="PRO_0000273021" description="Membrane-bound glycerophospholipid O-acyltransferase 2">
    <location>
        <begin position="1"/>
        <end position="519"/>
    </location>
</feature>
<feature type="transmembrane region" description="Helical" evidence="3">
    <location>
        <begin position="22"/>
        <end position="42"/>
    </location>
</feature>
<feature type="transmembrane region" description="Helical" evidence="3">
    <location>
        <begin position="61"/>
        <end position="81"/>
    </location>
</feature>
<feature type="transmembrane region" description="Helical" evidence="3">
    <location>
        <begin position="88"/>
        <end position="108"/>
    </location>
</feature>
<feature type="transmembrane region" description="Helical" evidence="3">
    <location>
        <begin position="184"/>
        <end position="204"/>
    </location>
</feature>
<feature type="transmembrane region" description="Helical" evidence="3">
    <location>
        <begin position="236"/>
        <end position="256"/>
    </location>
</feature>
<feature type="transmembrane region" description="Helical" evidence="3">
    <location>
        <begin position="263"/>
        <end position="283"/>
    </location>
</feature>
<feature type="transmembrane region" description="Helical" evidence="3">
    <location>
        <begin position="365"/>
        <end position="385"/>
    </location>
</feature>
<feature type="transmembrane region" description="Helical" evidence="3">
    <location>
        <begin position="415"/>
        <end position="435"/>
    </location>
</feature>
<feature type="transmembrane region" description="Helical" evidence="3">
    <location>
        <begin position="443"/>
        <end position="463"/>
    </location>
</feature>
<feature type="region of interest" description="Disordered" evidence="4">
    <location>
        <begin position="497"/>
        <end position="519"/>
    </location>
</feature>
<feature type="active site" evidence="1">
    <location>
        <position position="341"/>
    </location>
</feature>
<feature type="active site" evidence="1">
    <location>
        <position position="372"/>
    </location>
</feature>
<feature type="splice variant" id="VSP_022457" description="In isoform 3." evidence="8">
    <location>
        <begin position="1"/>
        <end position="141"/>
    </location>
</feature>
<feature type="splice variant" id="VSP_022458" description="In isoform 2." evidence="7 8">
    <original>QCCFVFALGYLSVCQITRVYIFDYGQYSADFSG</original>
    <variation>H</variation>
    <location>
        <begin position="100"/>
        <end position="132"/>
    </location>
</feature>
<feature type="splice variant" id="VSP_022459" description="In isoform 3." evidence="8">
    <original>TSLAYEIHD</original>
    <variation>MDNILLIFQ</variation>
    <location>
        <begin position="142"/>
        <end position="150"/>
    </location>
</feature>
<feature type="sequence conflict" description="In Ref. 3; BAB28556." evidence="10" ref="3">
    <original>F</original>
    <variation>S</variation>
    <location>
        <position position="28"/>
    </location>
</feature>
<feature type="sequence conflict" description="In Ref. 3; BAB28556." evidence="10" ref="3">
    <original>V</original>
    <variation>L</variation>
    <location>
        <position position="40"/>
    </location>
</feature>
<keyword id="KW-0012">Acyltransferase</keyword>
<keyword id="KW-0025">Alternative splicing</keyword>
<keyword id="KW-0256">Endoplasmic reticulum</keyword>
<keyword id="KW-0444">Lipid biosynthesis</keyword>
<keyword id="KW-0443">Lipid metabolism</keyword>
<keyword id="KW-0472">Membrane</keyword>
<keyword id="KW-0594">Phospholipid biosynthesis</keyword>
<keyword id="KW-1208">Phospholipid metabolism</keyword>
<keyword id="KW-1185">Reference proteome</keyword>
<keyword id="KW-0808">Transferase</keyword>
<keyword id="KW-0812">Transmembrane</keyword>
<keyword id="KW-1133">Transmembrane helix</keyword>
<name>MBOA2_MOUSE</name>
<evidence type="ECO:0000250" key="1"/>
<evidence type="ECO:0000250" key="2">
    <source>
        <dbReference type="UniProtKB" id="Q6ZWT7"/>
    </source>
</evidence>
<evidence type="ECO:0000255" key="3"/>
<evidence type="ECO:0000256" key="4">
    <source>
        <dbReference type="SAM" id="MobiDB-lite"/>
    </source>
</evidence>
<evidence type="ECO:0000269" key="5">
    <source>
    </source>
</evidence>
<evidence type="ECO:0000269" key="6">
    <source>
    </source>
</evidence>
<evidence type="ECO:0000303" key="7">
    <source>
    </source>
</evidence>
<evidence type="ECO:0000303" key="8">
    <source>
    </source>
</evidence>
<evidence type="ECO:0000303" key="9">
    <source>
    </source>
</evidence>
<evidence type="ECO:0000305" key="10"/>
<evidence type="ECO:0000312" key="11">
    <source>
        <dbReference type="MGI" id="MGI:1914466"/>
    </source>
</evidence>
<dbReference type="EC" id="2.3.1.-" evidence="5"/>
<dbReference type="EC" id="2.3.1.23" evidence="5"/>
<dbReference type="EC" id="2.3.1.n7" evidence="5"/>
<dbReference type="EMBL" id="AB305046">
    <property type="protein sequence ID" value="BAF93902.1"/>
    <property type="molecule type" value="mRNA"/>
</dbReference>
<dbReference type="EMBL" id="AB297383">
    <property type="protein sequence ID" value="BAG12122.1"/>
    <property type="molecule type" value="mRNA"/>
</dbReference>
<dbReference type="EMBL" id="AK012931">
    <property type="protein sequence ID" value="BAB28556.1"/>
    <property type="molecule type" value="mRNA"/>
</dbReference>
<dbReference type="EMBL" id="AK031824">
    <property type="protein sequence ID" value="BAC27567.1"/>
    <property type="status" value="ALT_INIT"/>
    <property type="molecule type" value="mRNA"/>
</dbReference>
<dbReference type="EMBL" id="AK033106">
    <property type="protein sequence ID" value="BAC28154.1"/>
    <property type="molecule type" value="mRNA"/>
</dbReference>
<dbReference type="EMBL" id="AK034873">
    <property type="protein sequence ID" value="BAC28863.1"/>
    <property type="molecule type" value="mRNA"/>
</dbReference>
<dbReference type="EMBL" id="AK076045">
    <property type="protein sequence ID" value="BAC36144.1"/>
    <property type="molecule type" value="mRNA"/>
</dbReference>
<dbReference type="EMBL" id="BC025020">
    <property type="protein sequence ID" value="AAH25020.1"/>
    <property type="molecule type" value="mRNA"/>
</dbReference>
<dbReference type="CCDS" id="CCDS25845.1">
    <molecule id="Q8R3I2-1"/>
</dbReference>
<dbReference type="CCDS" id="CCDS36423.1">
    <molecule id="Q8R3I2-2"/>
</dbReference>
<dbReference type="RefSeq" id="NP_001076810.1">
    <molecule id="Q8R3I2-2"/>
    <property type="nucleotide sequence ID" value="NM_001083341.1"/>
</dbReference>
<dbReference type="RefSeq" id="NP_080313.2">
    <molecule id="Q8R3I2-1"/>
    <property type="nucleotide sequence ID" value="NM_026037.3"/>
</dbReference>
<dbReference type="RefSeq" id="XP_006515232.1">
    <property type="nucleotide sequence ID" value="XM_006515169.2"/>
</dbReference>
<dbReference type="RefSeq" id="XP_006515233.1">
    <molecule id="Q8R3I2-3"/>
    <property type="nucleotide sequence ID" value="XM_006515170.5"/>
</dbReference>
<dbReference type="RefSeq" id="XP_030102744.1">
    <molecule id="Q8R3I2-3"/>
    <property type="nucleotide sequence ID" value="XM_030246884.2"/>
</dbReference>
<dbReference type="SMR" id="Q8R3I2"/>
<dbReference type="FunCoup" id="Q8R3I2">
    <property type="interactions" value="1612"/>
</dbReference>
<dbReference type="STRING" id="10090.ENSMUSP00000106567"/>
<dbReference type="ChEMBL" id="CHEMBL1255156"/>
<dbReference type="SwissLipids" id="SLP:000000287"/>
<dbReference type="iPTMnet" id="Q8R3I2"/>
<dbReference type="PhosphoSitePlus" id="Q8R3I2"/>
<dbReference type="SwissPalm" id="Q8R3I2"/>
<dbReference type="PaxDb" id="10090-ENSMUSP00000106567"/>
<dbReference type="PeptideAtlas" id="Q8R3I2"/>
<dbReference type="ProteomicsDB" id="293418">
    <molecule id="Q8R3I2-1"/>
</dbReference>
<dbReference type="ProteomicsDB" id="293419">
    <molecule id="Q8R3I2-2"/>
</dbReference>
<dbReference type="ProteomicsDB" id="293420">
    <molecule id="Q8R3I2-3"/>
</dbReference>
<dbReference type="Antibodypedia" id="12361">
    <property type="antibodies" value="73 antibodies from 18 providers"/>
</dbReference>
<dbReference type="Ensembl" id="ENSMUST00000110942.11">
    <molecule id="Q8R3I2-1"/>
    <property type="protein sequence ID" value="ENSMUSP00000106567.4"/>
    <property type="gene ID" value="ENSMUSG00000020646.18"/>
</dbReference>
<dbReference type="Ensembl" id="ENSMUST00000221952.2">
    <molecule id="Q8R3I2-2"/>
    <property type="protein sequence ID" value="ENSMUSP00000152348.2"/>
    <property type="gene ID" value="ENSMUSG00000020646.18"/>
</dbReference>
<dbReference type="GeneID" id="67216"/>
<dbReference type="KEGG" id="mmu:67216"/>
<dbReference type="UCSC" id="uc007neu.1">
    <molecule id="Q8R3I2-1"/>
    <property type="organism name" value="mouse"/>
</dbReference>
<dbReference type="UCSC" id="uc007nev.1">
    <molecule id="Q8R3I2-2"/>
    <property type="organism name" value="mouse"/>
</dbReference>
<dbReference type="UCSC" id="uc007nex.1">
    <molecule id="Q8R3I2-3"/>
    <property type="organism name" value="mouse"/>
</dbReference>
<dbReference type="AGR" id="MGI:1914466"/>
<dbReference type="CTD" id="129642"/>
<dbReference type="MGI" id="MGI:1914466">
    <property type="gene designation" value="Mboat2"/>
</dbReference>
<dbReference type="VEuPathDB" id="HostDB:ENSMUSG00000020646"/>
<dbReference type="eggNOG" id="KOG2704">
    <property type="taxonomic scope" value="Eukaryota"/>
</dbReference>
<dbReference type="GeneTree" id="ENSGT01030000234564"/>
<dbReference type="HOGENOM" id="CLU_011340_3_0_1"/>
<dbReference type="InParanoid" id="Q8R3I2"/>
<dbReference type="OMA" id="WHGTRPG"/>
<dbReference type="OrthoDB" id="286734at2759"/>
<dbReference type="PhylomeDB" id="Q8R3I2"/>
<dbReference type="TreeFam" id="TF314906"/>
<dbReference type="BRENDA" id="2.3.1.23">
    <property type="organism ID" value="3474"/>
</dbReference>
<dbReference type="Reactome" id="R-MMU-1482788">
    <property type="pathway name" value="Acyl chain remodelling of PC"/>
</dbReference>
<dbReference type="Reactome" id="R-MMU-1482839">
    <property type="pathway name" value="Acyl chain remodelling of PE"/>
</dbReference>
<dbReference type="UniPathway" id="UPA00085"/>
<dbReference type="BioGRID-ORCS" id="67216">
    <property type="hits" value="2 hits in 79 CRISPR screens"/>
</dbReference>
<dbReference type="ChiTaRS" id="Mboat2">
    <property type="organism name" value="mouse"/>
</dbReference>
<dbReference type="PRO" id="PR:Q8R3I2"/>
<dbReference type="Proteomes" id="UP000000589">
    <property type="component" value="Chromosome 12"/>
</dbReference>
<dbReference type="RNAct" id="Q8R3I2">
    <property type="molecule type" value="protein"/>
</dbReference>
<dbReference type="Bgee" id="ENSMUSG00000020646">
    <property type="expression patterns" value="Expressed in umbilical cord and 248 other cell types or tissues"/>
</dbReference>
<dbReference type="ExpressionAtlas" id="Q8R3I2">
    <property type="expression patterns" value="baseline and differential"/>
</dbReference>
<dbReference type="GO" id="GO:0005789">
    <property type="term" value="C:endoplasmic reticulum membrane"/>
    <property type="evidence" value="ECO:0000314"/>
    <property type="project" value="UniProtKB"/>
</dbReference>
<dbReference type="GO" id="GO:0047184">
    <property type="term" value="F:1-acylglycerophosphocholine O-acyltransferase activity"/>
    <property type="evidence" value="ECO:0000314"/>
    <property type="project" value="UniProtKB"/>
</dbReference>
<dbReference type="GO" id="GO:0106262">
    <property type="term" value="F:1-acylglycerophosphoethanolamine O-acyltransferase activity"/>
    <property type="evidence" value="ECO:0000314"/>
    <property type="project" value="UniProtKB"/>
</dbReference>
<dbReference type="GO" id="GO:0106263">
    <property type="term" value="F:1-acylglycerophosphoserine O-acyltransferase activity"/>
    <property type="evidence" value="ECO:0000250"/>
    <property type="project" value="UniProtKB"/>
</dbReference>
<dbReference type="GO" id="GO:0036151">
    <property type="term" value="P:phosphatidylcholine acyl-chain remodeling"/>
    <property type="evidence" value="ECO:0000315"/>
    <property type="project" value="UniProtKB"/>
</dbReference>
<dbReference type="GO" id="GO:0036152">
    <property type="term" value="P:phosphatidylethanolamine acyl-chain remodeling"/>
    <property type="evidence" value="ECO:0000315"/>
    <property type="project" value="UniProtKB"/>
</dbReference>
<dbReference type="GO" id="GO:0036150">
    <property type="term" value="P:phosphatidylserine acyl-chain remodeling"/>
    <property type="evidence" value="ECO:0000250"/>
    <property type="project" value="UniProtKB"/>
</dbReference>
<dbReference type="GO" id="GO:0008654">
    <property type="term" value="P:phospholipid biosynthetic process"/>
    <property type="evidence" value="ECO:0007669"/>
    <property type="project" value="UniProtKB-KW"/>
</dbReference>
<dbReference type="GO" id="GO:0032330">
    <property type="term" value="P:regulation of chondrocyte differentiation"/>
    <property type="evidence" value="ECO:0000315"/>
    <property type="project" value="UniProtKB"/>
</dbReference>
<dbReference type="InterPro" id="IPR049941">
    <property type="entry name" value="LPLAT_7/PORCN-like"/>
</dbReference>
<dbReference type="InterPro" id="IPR004299">
    <property type="entry name" value="MBOAT_fam"/>
</dbReference>
<dbReference type="PANTHER" id="PTHR13906:SF7">
    <property type="entry name" value="LYSOPHOSPHOLIPID ACYLTRANSFERASE 2"/>
    <property type="match status" value="1"/>
</dbReference>
<dbReference type="PANTHER" id="PTHR13906">
    <property type="entry name" value="PORCUPINE"/>
    <property type="match status" value="1"/>
</dbReference>
<dbReference type="Pfam" id="PF03062">
    <property type="entry name" value="MBOAT"/>
    <property type="match status" value="1"/>
</dbReference>
<protein>
    <recommendedName>
        <fullName evidence="2">Membrane-bound glycerophospholipid O-acyltransferase 2</fullName>
        <ecNumber evidence="5">2.3.1.-</ecNumber>
    </recommendedName>
    <alternativeName>
        <fullName>1-acylglycerophosphocholine O-acyltransferase</fullName>
        <ecNumber evidence="5">2.3.1.23</ecNumber>
    </alternativeName>
    <alternativeName>
        <fullName>1-acylglycerophosphoethanolamine O-acyltransferase</fullName>
        <ecNumber evidence="5">2.3.1.n7</ecNumber>
    </alternativeName>
    <alternativeName>
        <fullName>Lysophosphatidylcholine acyltransferase</fullName>
        <shortName>LPCAT</shortName>
        <shortName>Lyso-PC acyltransferase</shortName>
    </alternativeName>
    <alternativeName>
        <fullName evidence="9">Lysophosphatidylcholine acyltransferase 4</fullName>
        <shortName>Lyso-PC acyltransferase 4</shortName>
        <shortName>mLPCAT4</shortName>
    </alternativeName>
    <alternativeName>
        <fullName>Lysophosphatidylethanolamine acyltransferase</fullName>
        <shortName>LPEAT</shortName>
        <shortName>Lyso-PE acyltransferase</shortName>
    </alternativeName>
    <alternativeName>
        <fullName evidence="10">Lysophospholipid acyltransferase 2</fullName>
        <shortName>LPLAT 2</shortName>
    </alternativeName>
    <alternativeName>
        <fullName>Membrane-bound O-acyltransferase domain-containing protein 2</fullName>
        <shortName>O-acyltransferase domain-containing protein 2</shortName>
    </alternativeName>
</protein>
<gene>
    <name evidence="11" type="primary">Mboat2</name>
    <name evidence="9" type="synonym">Lpcat4</name>
    <name type="synonym">Oact2</name>
</gene>
<comment type="function">
    <text evidence="5 6">Acyltransferase which catalyzes the transfer of an acyl group from an acyl-CoA to a lysophospholipid leading to the production of a phospholipid and participates in the reacylation step of the phospholipid remodeling pathway also known as the Lands cycle (PubMed:18287005, PubMed:29196633). Catalyzes the acylation of lysophosphatidylcholine (1-acyl-sn-glycero-3-phosphocholine or LPC) and to a lesser extend lysophosphatidylethanolamine (1-acyl-sn-glycero-3-phosphoethanolamine or LPE) (PubMed:18287005, PubMed:29196633). Does not acylates lysophosphatidic acid (LPA) and lysophosphatidylserine (PubMed:18287005). Prefers oleoyl-CoA as the acyl donor (PubMed:18287005, PubMed:29196633). May be involved in chondrocyte differentiation (PubMed:29196633).</text>
</comment>
<comment type="catalytic activity">
    <reaction evidence="5">
        <text>a 1-acyl-sn-glycero-3-phosphocholine + an acyl-CoA = a 1,2-diacyl-sn-glycero-3-phosphocholine + CoA</text>
        <dbReference type="Rhea" id="RHEA:12937"/>
        <dbReference type="ChEBI" id="CHEBI:57287"/>
        <dbReference type="ChEBI" id="CHEBI:57643"/>
        <dbReference type="ChEBI" id="CHEBI:58168"/>
        <dbReference type="ChEBI" id="CHEBI:58342"/>
        <dbReference type="EC" id="2.3.1.23"/>
    </reaction>
    <physiologicalReaction direction="left-to-right" evidence="5">
        <dbReference type="Rhea" id="RHEA:12938"/>
    </physiologicalReaction>
</comment>
<comment type="catalytic activity">
    <reaction evidence="5">
        <text>a 1-acyl-sn-glycero-3-phosphoethanolamine + an acyl-CoA = a 1,2-diacyl-sn-glycero-3-phosphoethanolamine + CoA</text>
        <dbReference type="Rhea" id="RHEA:32995"/>
        <dbReference type="ChEBI" id="CHEBI:57287"/>
        <dbReference type="ChEBI" id="CHEBI:58342"/>
        <dbReference type="ChEBI" id="CHEBI:64381"/>
        <dbReference type="ChEBI" id="CHEBI:64612"/>
        <dbReference type="EC" id="2.3.1.n7"/>
    </reaction>
    <physiologicalReaction direction="left-to-right" evidence="5">
        <dbReference type="Rhea" id="RHEA:32996"/>
    </physiologicalReaction>
</comment>
<comment type="catalytic activity">
    <reaction evidence="5">
        <text>a 1-O-(1Z-alkenyl)-sn-glycero-3-phosphocholine + (9Z)-octadecenoyl-CoA = 1-O-(1Z)-alkenyl-2-(9Z)-octadecenoyl-sn-glycero-3-phosphocholine + CoA</text>
        <dbReference type="Rhea" id="RHEA:37627"/>
        <dbReference type="ChEBI" id="CHEBI:57287"/>
        <dbReference type="ChEBI" id="CHEBI:57387"/>
        <dbReference type="ChEBI" id="CHEBI:77287"/>
        <dbReference type="ChEBI" id="CHEBI:77294"/>
    </reaction>
    <physiologicalReaction direction="left-to-right" evidence="5">
        <dbReference type="Rhea" id="RHEA:37628"/>
    </physiologicalReaction>
</comment>
<comment type="catalytic activity">
    <reaction evidence="5">
        <text>a 1-O-(1Z-alkenyl)-sn-glycero-3-phosphoethanolamine + (9Z)-octadecenoyl-CoA = 1-O-(1Z)-alkenyl-2-(9Z)-octadecenoyl-sn-glycero-3-phosphoethanolamine + CoA</text>
        <dbReference type="Rhea" id="RHEA:37631"/>
        <dbReference type="ChEBI" id="CHEBI:57287"/>
        <dbReference type="ChEBI" id="CHEBI:57387"/>
        <dbReference type="ChEBI" id="CHEBI:77288"/>
        <dbReference type="ChEBI" id="CHEBI:77291"/>
    </reaction>
    <physiologicalReaction direction="left-to-right" evidence="5">
        <dbReference type="Rhea" id="RHEA:37632"/>
    </physiologicalReaction>
</comment>
<comment type="catalytic activity">
    <reaction evidence="5">
        <text>1-octadecanoyl-sn-glycero-3-phosphoethanolamine + (9Z)-octadecenoyl-CoA = 1-octadecanoyl-2-(9Z-octadecenoyl)-sn-glycero-3-phosphoethanolamine + CoA</text>
        <dbReference type="Rhea" id="RHEA:37523"/>
        <dbReference type="ChEBI" id="CHEBI:57287"/>
        <dbReference type="ChEBI" id="CHEBI:57387"/>
        <dbReference type="ChEBI" id="CHEBI:75036"/>
        <dbReference type="ChEBI" id="CHEBI:75038"/>
    </reaction>
    <physiologicalReaction direction="left-to-right" evidence="5">
        <dbReference type="Rhea" id="RHEA:37524"/>
    </physiologicalReaction>
</comment>
<comment type="catalytic activity">
    <reaction evidence="5">
        <text>1-octadecanoyl-sn-glycero-3-phosphocholine + (9Z)-octadecenoyl-CoA = 1-octadecanoyl-2-(9Z-octadecenoyl)-sn-glycero-3-phosphocholine + CoA</text>
        <dbReference type="Rhea" id="RHEA:37519"/>
        <dbReference type="ChEBI" id="CHEBI:57287"/>
        <dbReference type="ChEBI" id="CHEBI:57387"/>
        <dbReference type="ChEBI" id="CHEBI:73858"/>
        <dbReference type="ChEBI" id="CHEBI:75034"/>
    </reaction>
    <physiologicalReaction direction="left-to-right" evidence="5">
        <dbReference type="Rhea" id="RHEA:37520"/>
    </physiologicalReaction>
</comment>
<comment type="catalytic activity">
    <reaction evidence="5">
        <text>1-(9Z-octadecenoyl)-sn-glycero-3-phosphoethanolamine + (9Z)-octadecenoyl-CoA = 1,2-di-(9Z-octadecenoyl)-sn-glycero-3-phosphoethanolamine + CoA</text>
        <dbReference type="Rhea" id="RHEA:37499"/>
        <dbReference type="ChEBI" id="CHEBI:57287"/>
        <dbReference type="ChEBI" id="CHEBI:57387"/>
        <dbReference type="ChEBI" id="CHEBI:74971"/>
        <dbReference type="ChEBI" id="CHEBI:74986"/>
    </reaction>
    <physiologicalReaction direction="left-to-right" evidence="5">
        <dbReference type="Rhea" id="RHEA:37500"/>
    </physiologicalReaction>
</comment>
<comment type="catalytic activity">
    <reaction evidence="5">
        <text>1-hexadecanoyl-sn-glycero-3-phosphoethanolamine + (9Z)-octadecenoyl-CoA = 1-hexadecanoyl-2-(9Z-octadecenoyl)-sn-glycero-3-phosphoethanolamine + CoA</text>
        <dbReference type="Rhea" id="RHEA:36015"/>
        <dbReference type="ChEBI" id="CHEBI:57287"/>
        <dbReference type="ChEBI" id="CHEBI:57387"/>
        <dbReference type="ChEBI" id="CHEBI:73004"/>
        <dbReference type="ChEBI" id="CHEBI:73007"/>
    </reaction>
    <physiologicalReaction direction="left-to-right" evidence="5">
        <dbReference type="Rhea" id="RHEA:36016"/>
    </physiologicalReaction>
</comment>
<comment type="catalytic activity">
    <reaction evidence="5 6">
        <text>1-hexadecanoyl-sn-glycero-3-phosphocholine + (9Z)-octadecenoyl-CoA = 1-hexadecanoyl-2-(9Z-octadecenoyl)-sn-glycero-3-phosphocholine + CoA</text>
        <dbReference type="Rhea" id="RHEA:35991"/>
        <dbReference type="ChEBI" id="CHEBI:57287"/>
        <dbReference type="ChEBI" id="CHEBI:57387"/>
        <dbReference type="ChEBI" id="CHEBI:72998"/>
        <dbReference type="ChEBI" id="CHEBI:73001"/>
    </reaction>
    <physiologicalReaction direction="left-to-right" evidence="5 6">
        <dbReference type="Rhea" id="RHEA:35992"/>
    </physiologicalReaction>
</comment>
<comment type="catalytic activity">
    <reaction evidence="2">
        <text>(9Z)-hexadecenoyl-CoA + 1-hexadecanoyl-sn-glycero-3-phosphocholine = 1-hexadecanoyl-2-(9Z-hexadecenoyl)-sn-glycero-3-phosphocholine + CoA</text>
        <dbReference type="Rhea" id="RHEA:37207"/>
        <dbReference type="ChEBI" id="CHEBI:57287"/>
        <dbReference type="ChEBI" id="CHEBI:61540"/>
        <dbReference type="ChEBI" id="CHEBI:72998"/>
        <dbReference type="ChEBI" id="CHEBI:74000"/>
    </reaction>
    <physiologicalReaction direction="left-to-right" evidence="2">
        <dbReference type="Rhea" id="RHEA:37208"/>
    </physiologicalReaction>
</comment>
<comment type="catalytic activity">
    <reaction evidence="2">
        <text>1-hexadecanoyl-sn-glycero-3-phosphoethanolamine + (9Z)-hexadecenoyl-CoA = 1-hexadecanoyl-2-(9Z)-hexadecenoyl-sn-glycero-3-phosphoethanolamine + CoA</text>
        <dbReference type="Rhea" id="RHEA:37419"/>
        <dbReference type="ChEBI" id="CHEBI:57287"/>
        <dbReference type="ChEBI" id="CHEBI:61540"/>
        <dbReference type="ChEBI" id="CHEBI:73004"/>
        <dbReference type="ChEBI" id="CHEBI:73999"/>
    </reaction>
    <physiologicalReaction direction="left-to-right" evidence="2">
        <dbReference type="Rhea" id="RHEA:37420"/>
    </physiologicalReaction>
</comment>
<comment type="catalytic activity">
    <reaction evidence="2">
        <text>(9Z,12Z)-octadecadienoyl-CoA + 1-hexadecanoyl-sn-glycero-3-phosphocholine = 1-hexadecanoyl-2-(9Z,12Z-octadecadienoyl)-sn-glycero-3-phosphocholine + CoA</text>
        <dbReference type="Rhea" id="RHEA:35995"/>
        <dbReference type="ChEBI" id="CHEBI:57287"/>
        <dbReference type="ChEBI" id="CHEBI:57383"/>
        <dbReference type="ChEBI" id="CHEBI:72998"/>
        <dbReference type="ChEBI" id="CHEBI:73002"/>
    </reaction>
    <physiologicalReaction direction="left-to-right" evidence="2">
        <dbReference type="Rhea" id="RHEA:35996"/>
    </physiologicalReaction>
</comment>
<comment type="activity regulation">
    <text evidence="2">Partially inhibited by thimerosal.</text>
</comment>
<comment type="biophysicochemical properties">
    <kinetics>
        <KM evidence="5">5.3 uM for oleoyl-CoA (in the presence of LPC C16:0 as cosubstrate)</KM>
        <KM evidence="5">48.15 uM for oleoyl-CoA (in the presence of LPE C16:0 as cosubstrate)</KM>
        <KM evidence="5">7.9 uM for LPC C16:0 (in the presence of oleoyl-CoA as cosubstrate)</KM>
        <KM evidence="5">27.7 uM for LPE C16:0 (in the presence of oleoyl-CoA as cosubstrate)</KM>
        <Vmax evidence="5">24.24 nmol/min/mg enzyme with oleoyl-CoA and LPC C16:0 as substrates</Vmax>
        <Vmax evidence="5">26.3 nmol/min/mg enzyme with oleoyl-CoA and LPE C16:0 as substrates</Vmax>
    </kinetics>
</comment>
<comment type="pathway">
    <text evidence="5">Lipid metabolism; phospholipid metabolism.</text>
</comment>
<comment type="subcellular location">
    <subcellularLocation>
        <location evidence="5">Endoplasmic reticulum membrane</location>
        <topology evidence="3">Multi-pass membrane protein</topology>
    </subcellularLocation>
</comment>
<comment type="alternative products">
    <event type="alternative splicing"/>
    <isoform>
        <id>Q8R3I2-1</id>
        <name>1</name>
        <sequence type="displayed"/>
    </isoform>
    <isoform>
        <id>Q8R3I2-2</id>
        <name>2</name>
        <sequence type="described" ref="VSP_022458"/>
    </isoform>
    <isoform>
        <id>Q8R3I2-3</id>
        <name>3</name>
        <sequence type="described" ref="VSP_022457 VSP_022459"/>
    </isoform>
</comment>
<comment type="tissue specificity">
    <text evidence="5">Highly expressed in epididymis, brain, testis, and ovary.</text>
</comment>
<comment type="induction">
    <text evidence="6">Increased during chondrogenic differentiation.</text>
</comment>
<comment type="similarity">
    <text evidence="10">Belongs to the membrane-bound acyltransferase family.</text>
</comment>
<comment type="sequence caution" evidence="10">
    <conflict type="erroneous initiation">
        <sequence resource="EMBL-CDS" id="BAC27567"/>
    </conflict>
</comment>
<proteinExistence type="evidence at protein level"/>
<sequence length="519" mass="58995">MATTSTTGSTLLQPLSNAVQLPIDQVNFVVCQLFALLAAVWFRTYLHSSKTSSFIRHVVATLLGLYLAFFCFGWYALHFLVQSGISYCIMIIAGVESMQQCCFVFALGYLSVCQITRVYIFDYGQYSADFSGPMMIITQKITSLAYEIHDGMFRKDEELTPSQRGLAVRRMPSLLEYVSYTCNFMGILAGPLCSYKDYIAFIEGRASHVAQPSENGKDEQHGKADPSPNAAVTEKLLVCGLSLLFHLTISNMLPVEYNIDEHFQATASWPTKATYLYVSLLAARPKYYFAWTLADAINNAAGFGFRGYDKNGVARWDLISNLRIQQIEMSTSFKMFLDNWNIQTALWLKRVCYERATFSPTIQTFFLSAIWHGVYPGYYLTFLTGVLMTLAARAVRNNFRHYFLEPPQLKLFYDLITWVATQITISYTVVPFVLLSIKPSFTFYSSWYYCLHVCSILVLLLLPVKKSQRRTSTQENVHLSQAKKFDERDNPLGQNSFSTMNNVCNQNRDTGSRHSSLTQ</sequence>